<accession>A1WU53</accession>
<comment type="function">
    <text evidence="1">Catalyzes the attachment of threonine to tRNA(Thr) in a two-step reaction: L-threonine is first activated by ATP to form Thr-AMP and then transferred to the acceptor end of tRNA(Thr). Also edits incorrectly charged L-seryl-tRNA(Thr).</text>
</comment>
<comment type="catalytic activity">
    <reaction evidence="1">
        <text>tRNA(Thr) + L-threonine + ATP = L-threonyl-tRNA(Thr) + AMP + diphosphate + H(+)</text>
        <dbReference type="Rhea" id="RHEA:24624"/>
        <dbReference type="Rhea" id="RHEA-COMP:9670"/>
        <dbReference type="Rhea" id="RHEA-COMP:9704"/>
        <dbReference type="ChEBI" id="CHEBI:15378"/>
        <dbReference type="ChEBI" id="CHEBI:30616"/>
        <dbReference type="ChEBI" id="CHEBI:33019"/>
        <dbReference type="ChEBI" id="CHEBI:57926"/>
        <dbReference type="ChEBI" id="CHEBI:78442"/>
        <dbReference type="ChEBI" id="CHEBI:78534"/>
        <dbReference type="ChEBI" id="CHEBI:456215"/>
        <dbReference type="EC" id="6.1.1.3"/>
    </reaction>
</comment>
<comment type="cofactor">
    <cofactor evidence="1">
        <name>Zn(2+)</name>
        <dbReference type="ChEBI" id="CHEBI:29105"/>
    </cofactor>
    <text evidence="1">Binds 1 zinc ion per subunit.</text>
</comment>
<comment type="subunit">
    <text evidence="1">Homodimer.</text>
</comment>
<comment type="subcellular location">
    <subcellularLocation>
        <location evidence="1">Cytoplasm</location>
    </subcellularLocation>
</comment>
<comment type="similarity">
    <text evidence="1">Belongs to the class-II aminoacyl-tRNA synthetase family.</text>
</comment>
<feature type="chain" id="PRO_1000020402" description="Threonine--tRNA ligase">
    <location>
        <begin position="1"/>
        <end position="640"/>
    </location>
</feature>
<feature type="domain" description="TGS" evidence="2">
    <location>
        <begin position="1"/>
        <end position="61"/>
    </location>
</feature>
<feature type="region of interest" description="Catalytic" evidence="1">
    <location>
        <begin position="242"/>
        <end position="533"/>
    </location>
</feature>
<feature type="binding site" evidence="1">
    <location>
        <position position="333"/>
    </location>
    <ligand>
        <name>Zn(2+)</name>
        <dbReference type="ChEBI" id="CHEBI:29105"/>
    </ligand>
</feature>
<feature type="binding site" evidence="1">
    <location>
        <position position="384"/>
    </location>
    <ligand>
        <name>Zn(2+)</name>
        <dbReference type="ChEBI" id="CHEBI:29105"/>
    </ligand>
</feature>
<feature type="binding site" evidence="1">
    <location>
        <position position="510"/>
    </location>
    <ligand>
        <name>Zn(2+)</name>
        <dbReference type="ChEBI" id="CHEBI:29105"/>
    </ligand>
</feature>
<proteinExistence type="inferred from homology"/>
<sequence>MPAITLPDGSVKAFDHPVTTREIAESIGRKLAKDAIVGRVDGELIDLDRPIEHDAYVEIVTSNDPDGLEVIRHSTAHLMAQAVKQLHPEMQVTIGPTVDNGFYYDFAGERSLSEDELETIEQRMSELAEADHPVEREVWDREAARQFFLEQGETYKAQIIDDLPESETITVYRQGDFADLCRGPHVPSTGKLKAFKLTKVAGAYWRGDQNNEMLQRVYGTAWPDRKQLKAYLDRLAEAERRDHRRLGRTQDLFHVQEESPGMVFWHPRGWRLYLEVQDYIRRLMRDNGYQEIHTPMLVDRSLWERSGHWAMFAENMFVTESESRDYAVKPMNCPCHVEVFKQGLKSYRDLPLRLAEFGSCHRNEPSGTLHGLMRVRGFVQDDAHIFCTENQIQEEVRTFIDLVYRAYRDFGFEDVLIALSTRPDERVGDDALWDKAESALATALETHGLDYTLQPGEGAFYGPKIEFSLRDCLERVWQLGTIQVDFSMPGRLGAQFVDDDGERRTPVMLHRAILGSLERFIGILIEHYGGALPTWLAPVQAVVLNITDRQADYARSVEQQLLESGFRAEADLRNEKIGYKIREHTLQKVPYMLVLGDRELESGTVAVRHRDGTDLGSMELEELVARLSNDIAGHEREQED</sequence>
<gene>
    <name evidence="1" type="primary">thrS</name>
    <name type="ordered locus">Hhal_0427</name>
</gene>
<reference key="1">
    <citation type="submission" date="2006-12" db="EMBL/GenBank/DDBJ databases">
        <title>Complete sequence of Halorhodospira halophila SL1.</title>
        <authorList>
            <consortium name="US DOE Joint Genome Institute"/>
            <person name="Copeland A."/>
            <person name="Lucas S."/>
            <person name="Lapidus A."/>
            <person name="Barry K."/>
            <person name="Detter J.C."/>
            <person name="Glavina del Rio T."/>
            <person name="Hammon N."/>
            <person name="Israni S."/>
            <person name="Dalin E."/>
            <person name="Tice H."/>
            <person name="Pitluck S."/>
            <person name="Saunders E."/>
            <person name="Brettin T."/>
            <person name="Bruce D."/>
            <person name="Han C."/>
            <person name="Tapia R."/>
            <person name="Schmutz J."/>
            <person name="Larimer F."/>
            <person name="Land M."/>
            <person name="Hauser L."/>
            <person name="Kyrpides N."/>
            <person name="Mikhailova N."/>
            <person name="Hoff W."/>
            <person name="Richardson P."/>
        </authorList>
    </citation>
    <scope>NUCLEOTIDE SEQUENCE [LARGE SCALE GENOMIC DNA]</scope>
    <source>
        <strain>DSM 244 / SL1</strain>
    </source>
</reference>
<protein>
    <recommendedName>
        <fullName evidence="1">Threonine--tRNA ligase</fullName>
        <ecNumber evidence="1">6.1.1.3</ecNumber>
    </recommendedName>
    <alternativeName>
        <fullName evidence="1">Threonyl-tRNA synthetase</fullName>
        <shortName evidence="1">ThrRS</shortName>
    </alternativeName>
</protein>
<keyword id="KW-0030">Aminoacyl-tRNA synthetase</keyword>
<keyword id="KW-0067">ATP-binding</keyword>
<keyword id="KW-0963">Cytoplasm</keyword>
<keyword id="KW-0436">Ligase</keyword>
<keyword id="KW-0479">Metal-binding</keyword>
<keyword id="KW-0547">Nucleotide-binding</keyword>
<keyword id="KW-0648">Protein biosynthesis</keyword>
<keyword id="KW-1185">Reference proteome</keyword>
<keyword id="KW-0694">RNA-binding</keyword>
<keyword id="KW-0820">tRNA-binding</keyword>
<keyword id="KW-0862">Zinc</keyword>
<name>SYT_HALHL</name>
<dbReference type="EC" id="6.1.1.3" evidence="1"/>
<dbReference type="EMBL" id="CP000544">
    <property type="protein sequence ID" value="ABM61215.1"/>
    <property type="molecule type" value="Genomic_DNA"/>
</dbReference>
<dbReference type="RefSeq" id="WP_011813238.1">
    <property type="nucleotide sequence ID" value="NC_008789.1"/>
</dbReference>
<dbReference type="SMR" id="A1WU53"/>
<dbReference type="STRING" id="349124.Hhal_0427"/>
<dbReference type="KEGG" id="hha:Hhal_0427"/>
<dbReference type="eggNOG" id="COG0441">
    <property type="taxonomic scope" value="Bacteria"/>
</dbReference>
<dbReference type="HOGENOM" id="CLU_008554_0_1_6"/>
<dbReference type="OrthoDB" id="9802304at2"/>
<dbReference type="Proteomes" id="UP000000647">
    <property type="component" value="Chromosome"/>
</dbReference>
<dbReference type="GO" id="GO:0005829">
    <property type="term" value="C:cytosol"/>
    <property type="evidence" value="ECO:0007669"/>
    <property type="project" value="TreeGrafter"/>
</dbReference>
<dbReference type="GO" id="GO:0005524">
    <property type="term" value="F:ATP binding"/>
    <property type="evidence" value="ECO:0007669"/>
    <property type="project" value="UniProtKB-UniRule"/>
</dbReference>
<dbReference type="GO" id="GO:0046872">
    <property type="term" value="F:metal ion binding"/>
    <property type="evidence" value="ECO:0007669"/>
    <property type="project" value="UniProtKB-KW"/>
</dbReference>
<dbReference type="GO" id="GO:0004829">
    <property type="term" value="F:threonine-tRNA ligase activity"/>
    <property type="evidence" value="ECO:0007669"/>
    <property type="project" value="UniProtKB-UniRule"/>
</dbReference>
<dbReference type="GO" id="GO:0000049">
    <property type="term" value="F:tRNA binding"/>
    <property type="evidence" value="ECO:0007669"/>
    <property type="project" value="UniProtKB-KW"/>
</dbReference>
<dbReference type="GO" id="GO:0006435">
    <property type="term" value="P:threonyl-tRNA aminoacylation"/>
    <property type="evidence" value="ECO:0007669"/>
    <property type="project" value="UniProtKB-UniRule"/>
</dbReference>
<dbReference type="CDD" id="cd01667">
    <property type="entry name" value="TGS_ThrRS"/>
    <property type="match status" value="1"/>
</dbReference>
<dbReference type="CDD" id="cd00860">
    <property type="entry name" value="ThrRS_anticodon"/>
    <property type="match status" value="1"/>
</dbReference>
<dbReference type="CDD" id="cd00771">
    <property type="entry name" value="ThrRS_core"/>
    <property type="match status" value="1"/>
</dbReference>
<dbReference type="FunFam" id="3.10.20.30:FF:000005">
    <property type="entry name" value="Threonine--tRNA ligase"/>
    <property type="match status" value="1"/>
</dbReference>
<dbReference type="FunFam" id="3.30.54.20:FF:000002">
    <property type="entry name" value="Threonine--tRNA ligase"/>
    <property type="match status" value="1"/>
</dbReference>
<dbReference type="FunFam" id="3.30.930.10:FF:000002">
    <property type="entry name" value="Threonine--tRNA ligase"/>
    <property type="match status" value="1"/>
</dbReference>
<dbReference type="FunFam" id="3.40.50.800:FF:000001">
    <property type="entry name" value="Threonine--tRNA ligase"/>
    <property type="match status" value="1"/>
</dbReference>
<dbReference type="FunFam" id="3.30.980.10:FF:000005">
    <property type="entry name" value="Threonyl-tRNA synthetase, mitochondrial"/>
    <property type="match status" value="1"/>
</dbReference>
<dbReference type="Gene3D" id="3.10.20.30">
    <property type="match status" value="1"/>
</dbReference>
<dbReference type="Gene3D" id="3.30.54.20">
    <property type="match status" value="1"/>
</dbReference>
<dbReference type="Gene3D" id="3.40.50.800">
    <property type="entry name" value="Anticodon-binding domain"/>
    <property type="match status" value="1"/>
</dbReference>
<dbReference type="Gene3D" id="3.30.930.10">
    <property type="entry name" value="Bira Bifunctional Protein, Domain 2"/>
    <property type="match status" value="1"/>
</dbReference>
<dbReference type="Gene3D" id="3.30.980.10">
    <property type="entry name" value="Threonyl-trna Synthetase, Chain A, domain 2"/>
    <property type="match status" value="1"/>
</dbReference>
<dbReference type="HAMAP" id="MF_00184">
    <property type="entry name" value="Thr_tRNA_synth"/>
    <property type="match status" value="1"/>
</dbReference>
<dbReference type="InterPro" id="IPR002314">
    <property type="entry name" value="aa-tRNA-synt_IIb"/>
</dbReference>
<dbReference type="InterPro" id="IPR006195">
    <property type="entry name" value="aa-tRNA-synth_II"/>
</dbReference>
<dbReference type="InterPro" id="IPR045864">
    <property type="entry name" value="aa-tRNA-synth_II/BPL/LPL"/>
</dbReference>
<dbReference type="InterPro" id="IPR004154">
    <property type="entry name" value="Anticodon-bd"/>
</dbReference>
<dbReference type="InterPro" id="IPR036621">
    <property type="entry name" value="Anticodon-bd_dom_sf"/>
</dbReference>
<dbReference type="InterPro" id="IPR012675">
    <property type="entry name" value="Beta-grasp_dom_sf"/>
</dbReference>
<dbReference type="InterPro" id="IPR004095">
    <property type="entry name" value="TGS"/>
</dbReference>
<dbReference type="InterPro" id="IPR012676">
    <property type="entry name" value="TGS-like"/>
</dbReference>
<dbReference type="InterPro" id="IPR002320">
    <property type="entry name" value="Thr-tRNA-ligase_IIa"/>
</dbReference>
<dbReference type="InterPro" id="IPR018163">
    <property type="entry name" value="Thr/Ala-tRNA-synth_IIc_edit"/>
</dbReference>
<dbReference type="InterPro" id="IPR047246">
    <property type="entry name" value="ThrRS_anticodon"/>
</dbReference>
<dbReference type="InterPro" id="IPR033728">
    <property type="entry name" value="ThrRS_core"/>
</dbReference>
<dbReference type="InterPro" id="IPR012947">
    <property type="entry name" value="tRNA_SAD"/>
</dbReference>
<dbReference type="NCBIfam" id="TIGR00418">
    <property type="entry name" value="thrS"/>
    <property type="match status" value="1"/>
</dbReference>
<dbReference type="PANTHER" id="PTHR11451:SF44">
    <property type="entry name" value="THREONINE--TRNA LIGASE, CHLOROPLASTIC_MITOCHONDRIAL 2"/>
    <property type="match status" value="1"/>
</dbReference>
<dbReference type="PANTHER" id="PTHR11451">
    <property type="entry name" value="THREONINE-TRNA LIGASE"/>
    <property type="match status" value="1"/>
</dbReference>
<dbReference type="Pfam" id="PF03129">
    <property type="entry name" value="HGTP_anticodon"/>
    <property type="match status" value="1"/>
</dbReference>
<dbReference type="Pfam" id="PF02824">
    <property type="entry name" value="TGS"/>
    <property type="match status" value="1"/>
</dbReference>
<dbReference type="Pfam" id="PF00587">
    <property type="entry name" value="tRNA-synt_2b"/>
    <property type="match status" value="1"/>
</dbReference>
<dbReference type="Pfam" id="PF07973">
    <property type="entry name" value="tRNA_SAD"/>
    <property type="match status" value="1"/>
</dbReference>
<dbReference type="PRINTS" id="PR01047">
    <property type="entry name" value="TRNASYNTHTHR"/>
</dbReference>
<dbReference type="SMART" id="SM00863">
    <property type="entry name" value="tRNA_SAD"/>
    <property type="match status" value="1"/>
</dbReference>
<dbReference type="SUPFAM" id="SSF52954">
    <property type="entry name" value="Class II aaRS ABD-related"/>
    <property type="match status" value="1"/>
</dbReference>
<dbReference type="SUPFAM" id="SSF55681">
    <property type="entry name" value="Class II aaRS and biotin synthetases"/>
    <property type="match status" value="1"/>
</dbReference>
<dbReference type="SUPFAM" id="SSF81271">
    <property type="entry name" value="TGS-like"/>
    <property type="match status" value="1"/>
</dbReference>
<dbReference type="SUPFAM" id="SSF55186">
    <property type="entry name" value="ThrRS/AlaRS common domain"/>
    <property type="match status" value="1"/>
</dbReference>
<dbReference type="PROSITE" id="PS50862">
    <property type="entry name" value="AA_TRNA_LIGASE_II"/>
    <property type="match status" value="1"/>
</dbReference>
<dbReference type="PROSITE" id="PS51880">
    <property type="entry name" value="TGS"/>
    <property type="match status" value="1"/>
</dbReference>
<evidence type="ECO:0000255" key="1">
    <source>
        <dbReference type="HAMAP-Rule" id="MF_00184"/>
    </source>
</evidence>
<evidence type="ECO:0000255" key="2">
    <source>
        <dbReference type="PROSITE-ProRule" id="PRU01228"/>
    </source>
</evidence>
<organism>
    <name type="scientific">Halorhodospira halophila (strain DSM 244 / SL1)</name>
    <name type="common">Ectothiorhodospira halophila (strain DSM 244 / SL1)</name>
    <dbReference type="NCBI Taxonomy" id="349124"/>
    <lineage>
        <taxon>Bacteria</taxon>
        <taxon>Pseudomonadati</taxon>
        <taxon>Pseudomonadota</taxon>
        <taxon>Gammaproteobacteria</taxon>
        <taxon>Chromatiales</taxon>
        <taxon>Ectothiorhodospiraceae</taxon>
        <taxon>Halorhodospira</taxon>
    </lineage>
</organism>